<sequence length="75" mass="8609">MLIPHDQLESDTLTRLIEDFVTRDGTDNGDETPLDTRVARVRRALDRGEAVIVFDADSQQCQLALKRDVPREWLD</sequence>
<dbReference type="EMBL" id="CP000304">
    <property type="protein sequence ID" value="ABP79127.1"/>
    <property type="molecule type" value="Genomic_DNA"/>
</dbReference>
<dbReference type="RefSeq" id="WP_011912608.1">
    <property type="nucleotide sequence ID" value="NC_009434.1"/>
</dbReference>
<dbReference type="SMR" id="A4VJH6"/>
<dbReference type="KEGG" id="psa:PST_1436"/>
<dbReference type="eggNOG" id="COG3089">
    <property type="taxonomic scope" value="Bacteria"/>
</dbReference>
<dbReference type="HOGENOM" id="CLU_186759_2_0_6"/>
<dbReference type="Proteomes" id="UP000000233">
    <property type="component" value="Chromosome"/>
</dbReference>
<dbReference type="Gene3D" id="1.10.10.610">
    <property type="entry name" value="YehU-like"/>
    <property type="match status" value="1"/>
</dbReference>
<dbReference type="HAMAP" id="MF_00690">
    <property type="entry name" value="UPF0270"/>
    <property type="match status" value="1"/>
</dbReference>
<dbReference type="InterPro" id="IPR010648">
    <property type="entry name" value="UPF0270"/>
</dbReference>
<dbReference type="InterPro" id="IPR036685">
    <property type="entry name" value="YehU-like_sf"/>
</dbReference>
<dbReference type="NCBIfam" id="NF001441">
    <property type="entry name" value="PRK00304.1"/>
    <property type="match status" value="1"/>
</dbReference>
<dbReference type="Pfam" id="PF06794">
    <property type="entry name" value="UPF0270"/>
    <property type="match status" value="1"/>
</dbReference>
<dbReference type="PIRSF" id="PIRSF006169">
    <property type="entry name" value="UCP006169"/>
    <property type="match status" value="1"/>
</dbReference>
<dbReference type="SUPFAM" id="SSF118001">
    <property type="entry name" value="YehU-like"/>
    <property type="match status" value="1"/>
</dbReference>
<protein>
    <recommendedName>
        <fullName evidence="1">UPF0270 protein PST_1436</fullName>
    </recommendedName>
</protein>
<reference key="1">
    <citation type="journal article" date="2008" name="Proc. Natl. Acad. Sci. U.S.A.">
        <title>Nitrogen fixation island and rhizosphere competence traits in the genome of root-associated Pseudomonas stutzeri A1501.</title>
        <authorList>
            <person name="Yan Y."/>
            <person name="Yang J."/>
            <person name="Dou Y."/>
            <person name="Chen M."/>
            <person name="Ping S."/>
            <person name="Peng J."/>
            <person name="Lu W."/>
            <person name="Zhang W."/>
            <person name="Yao Z."/>
            <person name="Li H."/>
            <person name="Liu W."/>
            <person name="He S."/>
            <person name="Geng L."/>
            <person name="Zhang X."/>
            <person name="Yang F."/>
            <person name="Yu H."/>
            <person name="Zhan Y."/>
            <person name="Li D."/>
            <person name="Lin Z."/>
            <person name="Wang Y."/>
            <person name="Elmerich C."/>
            <person name="Lin M."/>
            <person name="Jin Q."/>
        </authorList>
    </citation>
    <scope>NUCLEOTIDE SEQUENCE [LARGE SCALE GENOMIC DNA]</scope>
    <source>
        <strain>A1501</strain>
    </source>
</reference>
<organism>
    <name type="scientific">Stutzerimonas stutzeri (strain A1501)</name>
    <name type="common">Pseudomonas stutzeri</name>
    <dbReference type="NCBI Taxonomy" id="379731"/>
    <lineage>
        <taxon>Bacteria</taxon>
        <taxon>Pseudomonadati</taxon>
        <taxon>Pseudomonadota</taxon>
        <taxon>Gammaproteobacteria</taxon>
        <taxon>Pseudomonadales</taxon>
        <taxon>Pseudomonadaceae</taxon>
        <taxon>Stutzerimonas</taxon>
    </lineage>
</organism>
<feature type="chain" id="PRO_1000045171" description="UPF0270 protein PST_1436">
    <location>
        <begin position="1"/>
        <end position="75"/>
    </location>
</feature>
<comment type="similarity">
    <text evidence="1">Belongs to the UPF0270 family.</text>
</comment>
<name>Y1436_STUS1</name>
<evidence type="ECO:0000255" key="1">
    <source>
        <dbReference type="HAMAP-Rule" id="MF_00690"/>
    </source>
</evidence>
<keyword id="KW-1185">Reference proteome</keyword>
<gene>
    <name type="ordered locus">PST_1436</name>
</gene>
<accession>A4VJH6</accession>
<proteinExistence type="inferred from homology"/>